<evidence type="ECO:0000255" key="1">
    <source>
        <dbReference type="HAMAP-Rule" id="MF_01197"/>
    </source>
</evidence>
<evidence type="ECO:0000256" key="2">
    <source>
        <dbReference type="SAM" id="MobiDB-lite"/>
    </source>
</evidence>
<evidence type="ECO:0000305" key="3"/>
<reference key="1">
    <citation type="journal article" date="2003" name="DNA Res.">
        <title>Complete genome structure of Gloeobacter violaceus PCC 7421, a cyanobacterium that lacks thylakoids.</title>
        <authorList>
            <person name="Nakamura Y."/>
            <person name="Kaneko T."/>
            <person name="Sato S."/>
            <person name="Mimuro M."/>
            <person name="Miyashita H."/>
            <person name="Tsuchiya T."/>
            <person name="Sasamoto S."/>
            <person name="Watanabe A."/>
            <person name="Kawashima K."/>
            <person name="Kishida Y."/>
            <person name="Kiyokawa C."/>
            <person name="Kohara M."/>
            <person name="Matsumoto M."/>
            <person name="Matsuno A."/>
            <person name="Nakazaki N."/>
            <person name="Shimpo S."/>
            <person name="Takeuchi C."/>
            <person name="Yamada M."/>
            <person name="Tabata S."/>
        </authorList>
    </citation>
    <scope>NUCLEOTIDE SEQUENCE [LARGE SCALE GENOMIC DNA]</scope>
    <source>
        <strain>ATCC 29082 / PCC 7421</strain>
    </source>
</reference>
<accession>Q7NMR2</accession>
<dbReference type="EMBL" id="BA000045">
    <property type="protein sequence ID" value="BAC88644.1"/>
    <property type="status" value="ALT_INIT"/>
    <property type="molecule type" value="Genomic_DNA"/>
</dbReference>
<dbReference type="RefSeq" id="NP_923649.1">
    <property type="nucleotide sequence ID" value="NC_005125.1"/>
</dbReference>
<dbReference type="RefSeq" id="WP_164928580.1">
    <property type="nucleotide sequence ID" value="NC_005125.1"/>
</dbReference>
<dbReference type="SMR" id="Q7NMR2"/>
<dbReference type="STRING" id="251221.gene:10758179"/>
<dbReference type="EnsemblBacteria" id="BAC88644">
    <property type="protein sequence ID" value="BAC88644"/>
    <property type="gene ID" value="BAC88644"/>
</dbReference>
<dbReference type="KEGG" id="gvi:glr0703"/>
<dbReference type="eggNOG" id="COG1799">
    <property type="taxonomic scope" value="Bacteria"/>
</dbReference>
<dbReference type="HOGENOM" id="CLU_078499_1_1_3"/>
<dbReference type="InParanoid" id="Q7NMR2"/>
<dbReference type="OrthoDB" id="9815206at2"/>
<dbReference type="PhylomeDB" id="Q7NMR2"/>
<dbReference type="Proteomes" id="UP000000557">
    <property type="component" value="Chromosome"/>
</dbReference>
<dbReference type="GO" id="GO:0005737">
    <property type="term" value="C:cytoplasm"/>
    <property type="evidence" value="ECO:0007669"/>
    <property type="project" value="UniProtKB-SubCell"/>
</dbReference>
<dbReference type="GO" id="GO:0000917">
    <property type="term" value="P:division septum assembly"/>
    <property type="evidence" value="ECO:0007669"/>
    <property type="project" value="UniProtKB-KW"/>
</dbReference>
<dbReference type="GO" id="GO:0043093">
    <property type="term" value="P:FtsZ-dependent cytokinesis"/>
    <property type="evidence" value="ECO:0007669"/>
    <property type="project" value="UniProtKB-UniRule"/>
</dbReference>
<dbReference type="Gene3D" id="3.30.110.150">
    <property type="entry name" value="SepF-like protein"/>
    <property type="match status" value="1"/>
</dbReference>
<dbReference type="HAMAP" id="MF_01197">
    <property type="entry name" value="SepF"/>
    <property type="match status" value="1"/>
</dbReference>
<dbReference type="InterPro" id="IPR023052">
    <property type="entry name" value="Cell_div_SepF"/>
</dbReference>
<dbReference type="InterPro" id="IPR007561">
    <property type="entry name" value="Cell_div_SepF/SepF-rel"/>
</dbReference>
<dbReference type="InterPro" id="IPR038594">
    <property type="entry name" value="SepF-like_sf"/>
</dbReference>
<dbReference type="PANTHER" id="PTHR35798">
    <property type="entry name" value="CELL DIVISION PROTEIN SEPF"/>
    <property type="match status" value="1"/>
</dbReference>
<dbReference type="PANTHER" id="PTHR35798:SF1">
    <property type="entry name" value="CELL DIVISION PROTEIN SEPF"/>
    <property type="match status" value="1"/>
</dbReference>
<dbReference type="Pfam" id="PF04472">
    <property type="entry name" value="SepF"/>
    <property type="match status" value="1"/>
</dbReference>
<proteinExistence type="inferred from homology"/>
<feature type="chain" id="PRO_0000334013" description="Cell division protein SepF">
    <location>
        <begin position="1"/>
        <end position="192"/>
    </location>
</feature>
<feature type="region of interest" description="Disordered" evidence="2">
    <location>
        <begin position="15"/>
        <end position="70"/>
    </location>
</feature>
<feature type="compositionally biased region" description="Acidic residues" evidence="2">
    <location>
        <begin position="18"/>
        <end position="28"/>
    </location>
</feature>
<feature type="compositionally biased region" description="Basic and acidic residues" evidence="2">
    <location>
        <begin position="29"/>
        <end position="42"/>
    </location>
</feature>
<feature type="compositionally biased region" description="Low complexity" evidence="2">
    <location>
        <begin position="43"/>
        <end position="63"/>
    </location>
</feature>
<name>SEPF_GLOVI</name>
<protein>
    <recommendedName>
        <fullName evidence="1">Cell division protein SepF</fullName>
    </recommendedName>
</protein>
<sequence length="192" mass="20948">MSSFWSKVKDFVGFGDPLEYEEDGEEYEQVYREENKREEARRATAGTAAAATPTAAAQASDAAPMGSGPARKRVRAGNVIGMPNSGVNEVLVIEPRSFEEAPQIVQHLRDRKSVILNLTLMDSDQAQRSVDFVAGATFAIDGHQERVGDGIFLFTPSSVMISTEMPSQLRQANQAFGGNFRLNPEAPRRAQG</sequence>
<gene>
    <name evidence="1" type="primary">sepF</name>
    <name type="ordered locus">glr0703</name>
</gene>
<comment type="function">
    <text evidence="1">Cell division protein that is part of the divisome complex and is recruited early to the Z-ring. Probably stimulates Z-ring formation, perhaps through the cross-linking of FtsZ protofilaments. Its function overlaps with FtsA.</text>
</comment>
<comment type="subunit">
    <text evidence="1">Homodimer. Interacts with FtsZ.</text>
</comment>
<comment type="subcellular location">
    <subcellularLocation>
        <location evidence="1">Cytoplasm</location>
    </subcellularLocation>
    <text evidence="1">Localizes to the division site, in a FtsZ-dependent manner.</text>
</comment>
<comment type="similarity">
    <text evidence="1">Belongs to the SepF family.</text>
</comment>
<comment type="sequence caution" evidence="3">
    <conflict type="erroneous initiation">
        <sequence resource="EMBL-CDS" id="BAC88644"/>
    </conflict>
</comment>
<organism>
    <name type="scientific">Gloeobacter violaceus (strain ATCC 29082 / PCC 7421)</name>
    <dbReference type="NCBI Taxonomy" id="251221"/>
    <lineage>
        <taxon>Bacteria</taxon>
        <taxon>Bacillati</taxon>
        <taxon>Cyanobacteriota</taxon>
        <taxon>Cyanophyceae</taxon>
        <taxon>Gloeobacterales</taxon>
        <taxon>Gloeobacteraceae</taxon>
        <taxon>Gloeobacter</taxon>
    </lineage>
</organism>
<keyword id="KW-0131">Cell cycle</keyword>
<keyword id="KW-0132">Cell division</keyword>
<keyword id="KW-0963">Cytoplasm</keyword>
<keyword id="KW-1185">Reference proteome</keyword>
<keyword id="KW-0717">Septation</keyword>